<gene>
    <name evidence="1" type="primary">pyrH</name>
    <name type="ordered locus">Atu1376</name>
    <name type="ORF">AGR_C_2544</name>
</gene>
<organism>
    <name type="scientific">Agrobacterium fabrum (strain C58 / ATCC 33970)</name>
    <name type="common">Agrobacterium tumefaciens (strain C58)</name>
    <dbReference type="NCBI Taxonomy" id="176299"/>
    <lineage>
        <taxon>Bacteria</taxon>
        <taxon>Pseudomonadati</taxon>
        <taxon>Pseudomonadota</taxon>
        <taxon>Alphaproteobacteria</taxon>
        <taxon>Hyphomicrobiales</taxon>
        <taxon>Rhizobiaceae</taxon>
        <taxon>Rhizobium/Agrobacterium group</taxon>
        <taxon>Agrobacterium</taxon>
        <taxon>Agrobacterium tumefaciens complex</taxon>
    </lineage>
</organism>
<reference key="1">
    <citation type="journal article" date="2001" name="Science">
        <title>The genome of the natural genetic engineer Agrobacterium tumefaciens C58.</title>
        <authorList>
            <person name="Wood D.W."/>
            <person name="Setubal J.C."/>
            <person name="Kaul R."/>
            <person name="Monks D.E."/>
            <person name="Kitajima J.P."/>
            <person name="Okura V.K."/>
            <person name="Zhou Y."/>
            <person name="Chen L."/>
            <person name="Wood G.E."/>
            <person name="Almeida N.F. Jr."/>
            <person name="Woo L."/>
            <person name="Chen Y."/>
            <person name="Paulsen I.T."/>
            <person name="Eisen J.A."/>
            <person name="Karp P.D."/>
            <person name="Bovee D. Sr."/>
            <person name="Chapman P."/>
            <person name="Clendenning J."/>
            <person name="Deatherage G."/>
            <person name="Gillet W."/>
            <person name="Grant C."/>
            <person name="Kutyavin T."/>
            <person name="Levy R."/>
            <person name="Li M.-J."/>
            <person name="McClelland E."/>
            <person name="Palmieri A."/>
            <person name="Raymond C."/>
            <person name="Rouse G."/>
            <person name="Saenphimmachak C."/>
            <person name="Wu Z."/>
            <person name="Romero P."/>
            <person name="Gordon D."/>
            <person name="Zhang S."/>
            <person name="Yoo H."/>
            <person name="Tao Y."/>
            <person name="Biddle P."/>
            <person name="Jung M."/>
            <person name="Krespan W."/>
            <person name="Perry M."/>
            <person name="Gordon-Kamm B."/>
            <person name="Liao L."/>
            <person name="Kim S."/>
            <person name="Hendrick C."/>
            <person name="Zhao Z.-Y."/>
            <person name="Dolan M."/>
            <person name="Chumley F."/>
            <person name="Tingey S.V."/>
            <person name="Tomb J.-F."/>
            <person name="Gordon M.P."/>
            <person name="Olson M.V."/>
            <person name="Nester E.W."/>
        </authorList>
    </citation>
    <scope>NUCLEOTIDE SEQUENCE [LARGE SCALE GENOMIC DNA]</scope>
    <source>
        <strain>C58 / ATCC 33970</strain>
    </source>
</reference>
<reference key="2">
    <citation type="journal article" date="2001" name="Science">
        <title>Genome sequence of the plant pathogen and biotechnology agent Agrobacterium tumefaciens C58.</title>
        <authorList>
            <person name="Goodner B."/>
            <person name="Hinkle G."/>
            <person name="Gattung S."/>
            <person name="Miller N."/>
            <person name="Blanchard M."/>
            <person name="Qurollo B."/>
            <person name="Goldman B.S."/>
            <person name="Cao Y."/>
            <person name="Askenazi M."/>
            <person name="Halling C."/>
            <person name="Mullin L."/>
            <person name="Houmiel K."/>
            <person name="Gordon J."/>
            <person name="Vaudin M."/>
            <person name="Iartchouk O."/>
            <person name="Epp A."/>
            <person name="Liu F."/>
            <person name="Wollam C."/>
            <person name="Allinger M."/>
            <person name="Doughty D."/>
            <person name="Scott C."/>
            <person name="Lappas C."/>
            <person name="Markelz B."/>
            <person name="Flanagan C."/>
            <person name="Crowell C."/>
            <person name="Gurson J."/>
            <person name="Lomo C."/>
            <person name="Sear C."/>
            <person name="Strub G."/>
            <person name="Cielo C."/>
            <person name="Slater S."/>
        </authorList>
    </citation>
    <scope>NUCLEOTIDE SEQUENCE [LARGE SCALE GENOMIC DNA]</scope>
    <source>
        <strain>C58 / ATCC 33970</strain>
    </source>
</reference>
<protein>
    <recommendedName>
        <fullName evidence="1">Uridylate kinase</fullName>
        <shortName evidence="1">UK</shortName>
        <ecNumber evidence="1">2.7.4.22</ecNumber>
    </recommendedName>
    <alternativeName>
        <fullName evidence="1">Uridine monophosphate kinase</fullName>
        <shortName evidence="1">UMP kinase</shortName>
        <shortName evidence="1">UMPK</shortName>
    </alternativeName>
</protein>
<feature type="chain" id="PRO_0000143819" description="Uridylate kinase">
    <location>
        <begin position="1"/>
        <end position="241"/>
    </location>
</feature>
<feature type="region of interest" description="Involved in allosteric activation by GTP" evidence="1">
    <location>
        <begin position="22"/>
        <end position="27"/>
    </location>
</feature>
<feature type="binding site" evidence="1">
    <location>
        <begin position="14"/>
        <end position="17"/>
    </location>
    <ligand>
        <name>ATP</name>
        <dbReference type="ChEBI" id="CHEBI:30616"/>
    </ligand>
</feature>
<feature type="binding site" evidence="1">
    <location>
        <position position="56"/>
    </location>
    <ligand>
        <name>UMP</name>
        <dbReference type="ChEBI" id="CHEBI:57865"/>
    </ligand>
</feature>
<feature type="binding site" evidence="1">
    <location>
        <position position="57"/>
    </location>
    <ligand>
        <name>ATP</name>
        <dbReference type="ChEBI" id="CHEBI:30616"/>
    </ligand>
</feature>
<feature type="binding site" evidence="1">
    <location>
        <position position="61"/>
    </location>
    <ligand>
        <name>ATP</name>
        <dbReference type="ChEBI" id="CHEBI:30616"/>
    </ligand>
</feature>
<feature type="binding site" evidence="1">
    <location>
        <position position="76"/>
    </location>
    <ligand>
        <name>UMP</name>
        <dbReference type="ChEBI" id="CHEBI:57865"/>
    </ligand>
</feature>
<feature type="binding site" evidence="1">
    <location>
        <begin position="137"/>
        <end position="144"/>
    </location>
    <ligand>
        <name>UMP</name>
        <dbReference type="ChEBI" id="CHEBI:57865"/>
    </ligand>
</feature>
<feature type="binding site" evidence="1">
    <location>
        <position position="164"/>
    </location>
    <ligand>
        <name>ATP</name>
        <dbReference type="ChEBI" id="CHEBI:30616"/>
    </ligand>
</feature>
<feature type="binding site" evidence="1">
    <location>
        <position position="165"/>
    </location>
    <ligand>
        <name>ATP</name>
        <dbReference type="ChEBI" id="CHEBI:30616"/>
    </ligand>
</feature>
<feature type="binding site" evidence="1">
    <location>
        <position position="170"/>
    </location>
    <ligand>
        <name>ATP</name>
        <dbReference type="ChEBI" id="CHEBI:30616"/>
    </ligand>
</feature>
<feature type="binding site" evidence="1">
    <location>
        <position position="173"/>
    </location>
    <ligand>
        <name>ATP</name>
        <dbReference type="ChEBI" id="CHEBI:30616"/>
    </ligand>
</feature>
<evidence type="ECO:0000255" key="1">
    <source>
        <dbReference type="HAMAP-Rule" id="MF_01220"/>
    </source>
</evidence>
<evidence type="ECO:0000305" key="2"/>
<dbReference type="EC" id="2.7.4.22" evidence="1"/>
<dbReference type="EMBL" id="AE007869">
    <property type="protein sequence ID" value="AAK87168.2"/>
    <property type="status" value="ALT_INIT"/>
    <property type="molecule type" value="Genomic_DNA"/>
</dbReference>
<dbReference type="PIR" id="AH2745">
    <property type="entry name" value="AH2745"/>
</dbReference>
<dbReference type="PIR" id="G97526">
    <property type="entry name" value="G97526"/>
</dbReference>
<dbReference type="RefSeq" id="NP_354383.2">
    <property type="nucleotide sequence ID" value="NC_003062.2"/>
</dbReference>
<dbReference type="SMR" id="Q8UFM1"/>
<dbReference type="STRING" id="176299.Atu1376"/>
<dbReference type="EnsemblBacteria" id="AAK87168">
    <property type="protein sequence ID" value="AAK87168"/>
    <property type="gene ID" value="Atu1376"/>
</dbReference>
<dbReference type="KEGG" id="atu:Atu1376"/>
<dbReference type="PATRIC" id="fig|176299.10.peg.1399"/>
<dbReference type="eggNOG" id="COG0528">
    <property type="taxonomic scope" value="Bacteria"/>
</dbReference>
<dbReference type="HOGENOM" id="CLU_033861_0_0_5"/>
<dbReference type="OrthoDB" id="9807458at2"/>
<dbReference type="BioCyc" id="AGRO:ATU1376-MONOMER"/>
<dbReference type="UniPathway" id="UPA00159">
    <property type="reaction ID" value="UER00275"/>
</dbReference>
<dbReference type="Proteomes" id="UP000000813">
    <property type="component" value="Chromosome circular"/>
</dbReference>
<dbReference type="GO" id="GO:0005829">
    <property type="term" value="C:cytosol"/>
    <property type="evidence" value="ECO:0007669"/>
    <property type="project" value="TreeGrafter"/>
</dbReference>
<dbReference type="GO" id="GO:0005524">
    <property type="term" value="F:ATP binding"/>
    <property type="evidence" value="ECO:0007669"/>
    <property type="project" value="UniProtKB-KW"/>
</dbReference>
<dbReference type="GO" id="GO:0033862">
    <property type="term" value="F:UMP kinase activity"/>
    <property type="evidence" value="ECO:0007669"/>
    <property type="project" value="UniProtKB-EC"/>
</dbReference>
<dbReference type="GO" id="GO:0044210">
    <property type="term" value="P:'de novo' CTP biosynthetic process"/>
    <property type="evidence" value="ECO:0007669"/>
    <property type="project" value="UniProtKB-UniRule"/>
</dbReference>
<dbReference type="GO" id="GO:0006225">
    <property type="term" value="P:UDP biosynthetic process"/>
    <property type="evidence" value="ECO:0007669"/>
    <property type="project" value="TreeGrafter"/>
</dbReference>
<dbReference type="CDD" id="cd04254">
    <property type="entry name" value="AAK_UMPK-PyrH-Ec"/>
    <property type="match status" value="1"/>
</dbReference>
<dbReference type="FunFam" id="3.40.1160.10:FF:000001">
    <property type="entry name" value="Uridylate kinase"/>
    <property type="match status" value="1"/>
</dbReference>
<dbReference type="Gene3D" id="3.40.1160.10">
    <property type="entry name" value="Acetylglutamate kinase-like"/>
    <property type="match status" value="1"/>
</dbReference>
<dbReference type="HAMAP" id="MF_01220_B">
    <property type="entry name" value="PyrH_B"/>
    <property type="match status" value="1"/>
</dbReference>
<dbReference type="InterPro" id="IPR036393">
    <property type="entry name" value="AceGlu_kinase-like_sf"/>
</dbReference>
<dbReference type="InterPro" id="IPR001048">
    <property type="entry name" value="Asp/Glu/Uridylate_kinase"/>
</dbReference>
<dbReference type="InterPro" id="IPR011817">
    <property type="entry name" value="Uridylate_kinase"/>
</dbReference>
<dbReference type="InterPro" id="IPR015963">
    <property type="entry name" value="Uridylate_kinase_bac"/>
</dbReference>
<dbReference type="NCBIfam" id="TIGR02075">
    <property type="entry name" value="pyrH_bact"/>
    <property type="match status" value="1"/>
</dbReference>
<dbReference type="PANTHER" id="PTHR42833">
    <property type="entry name" value="URIDYLATE KINASE"/>
    <property type="match status" value="1"/>
</dbReference>
<dbReference type="PANTHER" id="PTHR42833:SF4">
    <property type="entry name" value="URIDYLATE KINASE PUMPKIN, CHLOROPLASTIC"/>
    <property type="match status" value="1"/>
</dbReference>
<dbReference type="Pfam" id="PF00696">
    <property type="entry name" value="AA_kinase"/>
    <property type="match status" value="1"/>
</dbReference>
<dbReference type="PIRSF" id="PIRSF005650">
    <property type="entry name" value="Uridylate_kin"/>
    <property type="match status" value="1"/>
</dbReference>
<dbReference type="SUPFAM" id="SSF53633">
    <property type="entry name" value="Carbamate kinase-like"/>
    <property type="match status" value="1"/>
</dbReference>
<name>PYRH_AGRFC</name>
<sequence>MMSSKPIYKRVLLKASGEALMGDQGFGIDVAVADRIASDIAEARAMGVEVGVVVGGGNIFRGVAVASKGGDRVTGDHMGMLATVINALALATSLRKLSIDTVVLSAIAMPEICESFSQRAALHHLAQGRVVIFAGGTGNPFFTTDSAAALRAAEMGAEAIFKGTQVDGIYSADPKKDPTATRFDELTHSEVLGKGLAVMDIAAVALARENHIPIIVFSIHEKGGFAQILTGGGRKTIVHDK</sequence>
<comment type="function">
    <text evidence="1">Catalyzes the reversible phosphorylation of UMP to UDP.</text>
</comment>
<comment type="catalytic activity">
    <reaction evidence="1">
        <text>UMP + ATP = UDP + ADP</text>
        <dbReference type="Rhea" id="RHEA:24400"/>
        <dbReference type="ChEBI" id="CHEBI:30616"/>
        <dbReference type="ChEBI" id="CHEBI:57865"/>
        <dbReference type="ChEBI" id="CHEBI:58223"/>
        <dbReference type="ChEBI" id="CHEBI:456216"/>
        <dbReference type="EC" id="2.7.4.22"/>
    </reaction>
</comment>
<comment type="activity regulation">
    <text evidence="1">Allosterically activated by GTP. Inhibited by UTP.</text>
</comment>
<comment type="pathway">
    <text evidence="1">Pyrimidine metabolism; CTP biosynthesis via de novo pathway; UDP from UMP (UMPK route): step 1/1.</text>
</comment>
<comment type="subunit">
    <text evidence="1">Homohexamer.</text>
</comment>
<comment type="subcellular location">
    <subcellularLocation>
        <location evidence="1">Cytoplasm</location>
    </subcellularLocation>
</comment>
<comment type="similarity">
    <text evidence="1">Belongs to the UMP kinase family.</text>
</comment>
<comment type="sequence caution" evidence="2">
    <conflict type="erroneous initiation">
        <sequence resource="EMBL-CDS" id="AAK87168"/>
    </conflict>
</comment>
<accession>Q8UFM1</accession>
<proteinExistence type="inferred from homology"/>
<keyword id="KW-0021">Allosteric enzyme</keyword>
<keyword id="KW-0067">ATP-binding</keyword>
<keyword id="KW-0963">Cytoplasm</keyword>
<keyword id="KW-0418">Kinase</keyword>
<keyword id="KW-0547">Nucleotide-binding</keyword>
<keyword id="KW-0665">Pyrimidine biosynthesis</keyword>
<keyword id="KW-1185">Reference proteome</keyword>
<keyword id="KW-0808">Transferase</keyword>